<evidence type="ECO:0000255" key="1">
    <source>
        <dbReference type="HAMAP-Rule" id="MF_00016"/>
    </source>
</evidence>
<sequence>MKIELLNTPADALEIRYEEQIRPLKMDDFTGQQRLTDNLRVFISAAKIRGDALDHVLLSGPPGLGKTTLANIIASEMGGNIKVTSGPMLDKAGNLAGLLTSLRKGDVLFIDEIHRLPAAVEEYLYSAMEDFRIDIMLDSGPSARAVQLRIEPFTLVGATTRSGLLTSPLRARFGISSRFDYYPPELLERIILRASGILGIGVTTEAAGEIAGRSRGTPRIANRLLRRARDFAQVADSFVINHDIAMTTLASLEIDEEGLDDMDKKIMDTIVNKFNGGPVGVASLAVSVGEEQDTIEEVYEPYLIQAGYLARTPRGRVATRLALKRFSSGSGINSSEGPLFDAAPAR</sequence>
<name>RUVB_CHLPD</name>
<organism>
    <name type="scientific">Chlorobium phaeobacteroides (strain DSM 266 / SMG 266 / 2430)</name>
    <dbReference type="NCBI Taxonomy" id="290317"/>
    <lineage>
        <taxon>Bacteria</taxon>
        <taxon>Pseudomonadati</taxon>
        <taxon>Chlorobiota</taxon>
        <taxon>Chlorobiia</taxon>
        <taxon>Chlorobiales</taxon>
        <taxon>Chlorobiaceae</taxon>
        <taxon>Chlorobium/Pelodictyon group</taxon>
        <taxon>Chlorobium</taxon>
    </lineage>
</organism>
<gene>
    <name evidence="1" type="primary">ruvB</name>
    <name type="ordered locus">Cpha266_0569</name>
</gene>
<proteinExistence type="inferred from homology"/>
<protein>
    <recommendedName>
        <fullName evidence="1">Holliday junction branch migration complex subunit RuvB</fullName>
        <ecNumber evidence="1">3.6.4.-</ecNumber>
    </recommendedName>
</protein>
<keyword id="KW-0067">ATP-binding</keyword>
<keyword id="KW-0963">Cytoplasm</keyword>
<keyword id="KW-0227">DNA damage</keyword>
<keyword id="KW-0233">DNA recombination</keyword>
<keyword id="KW-0234">DNA repair</keyword>
<keyword id="KW-0238">DNA-binding</keyword>
<keyword id="KW-0378">Hydrolase</keyword>
<keyword id="KW-0547">Nucleotide-binding</keyword>
<keyword id="KW-1185">Reference proteome</keyword>
<accession>A1BDZ8</accession>
<comment type="function">
    <text evidence="1">The RuvA-RuvB-RuvC complex processes Holliday junction (HJ) DNA during genetic recombination and DNA repair, while the RuvA-RuvB complex plays an important role in the rescue of blocked DNA replication forks via replication fork reversal (RFR). RuvA specifically binds to HJ cruciform DNA, conferring on it an open structure. The RuvB hexamer acts as an ATP-dependent pump, pulling dsDNA into and through the RuvAB complex. RuvB forms 2 homohexamers on either side of HJ DNA bound by 1 or 2 RuvA tetramers; 4 subunits per hexamer contact DNA at a time. Coordinated motions by a converter formed by DNA-disengaged RuvB subunits stimulates ATP hydrolysis and nucleotide exchange. Immobilization of the converter enables RuvB to convert the ATP-contained energy into a lever motion, pulling 2 nucleotides of DNA out of the RuvA tetramer per ATP hydrolyzed, thus driving DNA branch migration. The RuvB motors rotate together with the DNA substrate, which together with the progressing nucleotide cycle form the mechanistic basis for DNA recombination by continuous HJ branch migration. Branch migration allows RuvC to scan DNA until it finds its consensus sequence, where it cleaves and resolves cruciform DNA.</text>
</comment>
<comment type="catalytic activity">
    <reaction evidence="1">
        <text>ATP + H2O = ADP + phosphate + H(+)</text>
        <dbReference type="Rhea" id="RHEA:13065"/>
        <dbReference type="ChEBI" id="CHEBI:15377"/>
        <dbReference type="ChEBI" id="CHEBI:15378"/>
        <dbReference type="ChEBI" id="CHEBI:30616"/>
        <dbReference type="ChEBI" id="CHEBI:43474"/>
        <dbReference type="ChEBI" id="CHEBI:456216"/>
    </reaction>
</comment>
<comment type="subunit">
    <text evidence="1">Homohexamer. Forms an RuvA(8)-RuvB(12)-Holliday junction (HJ) complex. HJ DNA is sandwiched between 2 RuvA tetramers; dsDNA enters through RuvA and exits via RuvB. An RuvB hexamer assembles on each DNA strand where it exits the tetramer. Each RuvB hexamer is contacted by two RuvA subunits (via domain III) on 2 adjacent RuvB subunits; this complex drives branch migration. In the full resolvosome a probable DNA-RuvA(4)-RuvB(12)-RuvC(2) complex forms which resolves the HJ.</text>
</comment>
<comment type="subcellular location">
    <subcellularLocation>
        <location evidence="1">Cytoplasm</location>
    </subcellularLocation>
</comment>
<comment type="domain">
    <text evidence="1">Has 3 domains, the large (RuvB-L) and small ATPase (RuvB-S) domains and the C-terminal head (RuvB-H) domain. The head domain binds DNA, while the ATPase domains jointly bind ATP, ADP or are empty depending on the state of the subunit in the translocation cycle. During a single DNA translocation step the structure of each domain remains the same, but their relative positions change.</text>
</comment>
<comment type="similarity">
    <text evidence="1">Belongs to the RuvB family.</text>
</comment>
<dbReference type="EC" id="3.6.4.-" evidence="1"/>
<dbReference type="EMBL" id="CP000492">
    <property type="protein sequence ID" value="ABL64625.1"/>
    <property type="molecule type" value="Genomic_DNA"/>
</dbReference>
<dbReference type="RefSeq" id="WP_011744458.1">
    <property type="nucleotide sequence ID" value="NC_008639.1"/>
</dbReference>
<dbReference type="SMR" id="A1BDZ8"/>
<dbReference type="STRING" id="290317.Cpha266_0569"/>
<dbReference type="KEGG" id="cph:Cpha266_0569"/>
<dbReference type="eggNOG" id="COG2255">
    <property type="taxonomic scope" value="Bacteria"/>
</dbReference>
<dbReference type="HOGENOM" id="CLU_055599_1_0_10"/>
<dbReference type="OrthoDB" id="9804478at2"/>
<dbReference type="Proteomes" id="UP000008701">
    <property type="component" value="Chromosome"/>
</dbReference>
<dbReference type="GO" id="GO:0005737">
    <property type="term" value="C:cytoplasm"/>
    <property type="evidence" value="ECO:0007669"/>
    <property type="project" value="UniProtKB-SubCell"/>
</dbReference>
<dbReference type="GO" id="GO:0048476">
    <property type="term" value="C:Holliday junction resolvase complex"/>
    <property type="evidence" value="ECO:0007669"/>
    <property type="project" value="UniProtKB-UniRule"/>
</dbReference>
<dbReference type="GO" id="GO:0005524">
    <property type="term" value="F:ATP binding"/>
    <property type="evidence" value="ECO:0007669"/>
    <property type="project" value="UniProtKB-UniRule"/>
</dbReference>
<dbReference type="GO" id="GO:0016887">
    <property type="term" value="F:ATP hydrolysis activity"/>
    <property type="evidence" value="ECO:0007669"/>
    <property type="project" value="InterPro"/>
</dbReference>
<dbReference type="GO" id="GO:0000400">
    <property type="term" value="F:four-way junction DNA binding"/>
    <property type="evidence" value="ECO:0007669"/>
    <property type="project" value="UniProtKB-UniRule"/>
</dbReference>
<dbReference type="GO" id="GO:0009378">
    <property type="term" value="F:four-way junction helicase activity"/>
    <property type="evidence" value="ECO:0007669"/>
    <property type="project" value="InterPro"/>
</dbReference>
<dbReference type="GO" id="GO:0006310">
    <property type="term" value="P:DNA recombination"/>
    <property type="evidence" value="ECO:0007669"/>
    <property type="project" value="UniProtKB-UniRule"/>
</dbReference>
<dbReference type="GO" id="GO:0006281">
    <property type="term" value="P:DNA repair"/>
    <property type="evidence" value="ECO:0007669"/>
    <property type="project" value="UniProtKB-UniRule"/>
</dbReference>
<dbReference type="CDD" id="cd00009">
    <property type="entry name" value="AAA"/>
    <property type="match status" value="1"/>
</dbReference>
<dbReference type="Gene3D" id="1.10.8.60">
    <property type="match status" value="1"/>
</dbReference>
<dbReference type="Gene3D" id="3.40.50.300">
    <property type="entry name" value="P-loop containing nucleotide triphosphate hydrolases"/>
    <property type="match status" value="1"/>
</dbReference>
<dbReference type="Gene3D" id="1.10.10.10">
    <property type="entry name" value="Winged helix-like DNA-binding domain superfamily/Winged helix DNA-binding domain"/>
    <property type="match status" value="1"/>
</dbReference>
<dbReference type="HAMAP" id="MF_00016">
    <property type="entry name" value="DNA_HJ_migration_RuvB"/>
    <property type="match status" value="1"/>
</dbReference>
<dbReference type="InterPro" id="IPR003593">
    <property type="entry name" value="AAA+_ATPase"/>
</dbReference>
<dbReference type="InterPro" id="IPR041445">
    <property type="entry name" value="AAA_lid_4"/>
</dbReference>
<dbReference type="InterPro" id="IPR004605">
    <property type="entry name" value="DNA_helicase_Holl-junc_RuvB"/>
</dbReference>
<dbReference type="InterPro" id="IPR027417">
    <property type="entry name" value="P-loop_NTPase"/>
</dbReference>
<dbReference type="InterPro" id="IPR008824">
    <property type="entry name" value="RuvB-like_N"/>
</dbReference>
<dbReference type="InterPro" id="IPR008823">
    <property type="entry name" value="RuvB_C"/>
</dbReference>
<dbReference type="InterPro" id="IPR036388">
    <property type="entry name" value="WH-like_DNA-bd_sf"/>
</dbReference>
<dbReference type="InterPro" id="IPR036390">
    <property type="entry name" value="WH_DNA-bd_sf"/>
</dbReference>
<dbReference type="NCBIfam" id="NF000868">
    <property type="entry name" value="PRK00080.1"/>
    <property type="match status" value="1"/>
</dbReference>
<dbReference type="NCBIfam" id="TIGR00635">
    <property type="entry name" value="ruvB"/>
    <property type="match status" value="1"/>
</dbReference>
<dbReference type="PANTHER" id="PTHR42848">
    <property type="match status" value="1"/>
</dbReference>
<dbReference type="PANTHER" id="PTHR42848:SF1">
    <property type="entry name" value="HOLLIDAY JUNCTION BRANCH MIGRATION COMPLEX SUBUNIT RUVB"/>
    <property type="match status" value="1"/>
</dbReference>
<dbReference type="Pfam" id="PF17864">
    <property type="entry name" value="AAA_lid_4"/>
    <property type="match status" value="1"/>
</dbReference>
<dbReference type="Pfam" id="PF05491">
    <property type="entry name" value="RuvB_C"/>
    <property type="match status" value="1"/>
</dbReference>
<dbReference type="Pfam" id="PF05496">
    <property type="entry name" value="RuvB_N"/>
    <property type="match status" value="1"/>
</dbReference>
<dbReference type="SMART" id="SM00382">
    <property type="entry name" value="AAA"/>
    <property type="match status" value="1"/>
</dbReference>
<dbReference type="SUPFAM" id="SSF52540">
    <property type="entry name" value="P-loop containing nucleoside triphosphate hydrolases"/>
    <property type="match status" value="1"/>
</dbReference>
<dbReference type="SUPFAM" id="SSF46785">
    <property type="entry name" value="Winged helix' DNA-binding domain"/>
    <property type="match status" value="1"/>
</dbReference>
<feature type="chain" id="PRO_1000001386" description="Holliday junction branch migration complex subunit RuvB">
    <location>
        <begin position="1"/>
        <end position="346"/>
    </location>
</feature>
<feature type="region of interest" description="Large ATPase domain (RuvB-L)" evidence="1">
    <location>
        <begin position="1"/>
        <end position="182"/>
    </location>
</feature>
<feature type="region of interest" description="Small ATPAse domain (RuvB-S)" evidence="1">
    <location>
        <begin position="183"/>
        <end position="253"/>
    </location>
</feature>
<feature type="region of interest" description="Head domain (RuvB-H)" evidence="1">
    <location>
        <begin position="256"/>
        <end position="346"/>
    </location>
</feature>
<feature type="binding site" evidence="1">
    <location>
        <position position="21"/>
    </location>
    <ligand>
        <name>ATP</name>
        <dbReference type="ChEBI" id="CHEBI:30616"/>
    </ligand>
</feature>
<feature type="binding site" evidence="1">
    <location>
        <position position="22"/>
    </location>
    <ligand>
        <name>ATP</name>
        <dbReference type="ChEBI" id="CHEBI:30616"/>
    </ligand>
</feature>
<feature type="binding site" evidence="1">
    <location>
        <position position="63"/>
    </location>
    <ligand>
        <name>ATP</name>
        <dbReference type="ChEBI" id="CHEBI:30616"/>
    </ligand>
</feature>
<feature type="binding site" evidence="1">
    <location>
        <position position="66"/>
    </location>
    <ligand>
        <name>ATP</name>
        <dbReference type="ChEBI" id="CHEBI:30616"/>
    </ligand>
</feature>
<feature type="binding site" evidence="1">
    <location>
        <position position="67"/>
    </location>
    <ligand>
        <name>ATP</name>
        <dbReference type="ChEBI" id="CHEBI:30616"/>
    </ligand>
</feature>
<feature type="binding site" evidence="1">
    <location>
        <position position="67"/>
    </location>
    <ligand>
        <name>Mg(2+)</name>
        <dbReference type="ChEBI" id="CHEBI:18420"/>
    </ligand>
</feature>
<feature type="binding site" evidence="1">
    <location>
        <position position="68"/>
    </location>
    <ligand>
        <name>ATP</name>
        <dbReference type="ChEBI" id="CHEBI:30616"/>
    </ligand>
</feature>
<feature type="binding site" evidence="1">
    <location>
        <begin position="129"/>
        <end position="131"/>
    </location>
    <ligand>
        <name>ATP</name>
        <dbReference type="ChEBI" id="CHEBI:30616"/>
    </ligand>
</feature>
<feature type="binding site" evidence="1">
    <location>
        <position position="172"/>
    </location>
    <ligand>
        <name>ATP</name>
        <dbReference type="ChEBI" id="CHEBI:30616"/>
    </ligand>
</feature>
<feature type="binding site" evidence="1">
    <location>
        <position position="182"/>
    </location>
    <ligand>
        <name>ATP</name>
        <dbReference type="ChEBI" id="CHEBI:30616"/>
    </ligand>
</feature>
<feature type="binding site" evidence="1">
    <location>
        <position position="219"/>
    </location>
    <ligand>
        <name>ATP</name>
        <dbReference type="ChEBI" id="CHEBI:30616"/>
    </ligand>
</feature>
<feature type="binding site" evidence="1">
    <location>
        <position position="311"/>
    </location>
    <ligand>
        <name>DNA</name>
        <dbReference type="ChEBI" id="CHEBI:16991"/>
    </ligand>
</feature>
<feature type="binding site" evidence="1">
    <location>
        <position position="316"/>
    </location>
    <ligand>
        <name>DNA</name>
        <dbReference type="ChEBI" id="CHEBI:16991"/>
    </ligand>
</feature>
<reference key="1">
    <citation type="submission" date="2006-12" db="EMBL/GenBank/DDBJ databases">
        <title>Complete sequence of Chlorobium phaeobacteroides DSM 266.</title>
        <authorList>
            <consortium name="US DOE Joint Genome Institute"/>
            <person name="Copeland A."/>
            <person name="Lucas S."/>
            <person name="Lapidus A."/>
            <person name="Barry K."/>
            <person name="Detter J.C."/>
            <person name="Glavina del Rio T."/>
            <person name="Hammon N."/>
            <person name="Israni S."/>
            <person name="Pitluck S."/>
            <person name="Goltsman E."/>
            <person name="Schmutz J."/>
            <person name="Larimer F."/>
            <person name="Land M."/>
            <person name="Hauser L."/>
            <person name="Mikhailova N."/>
            <person name="Li T."/>
            <person name="Overmann J."/>
            <person name="Bryant D.A."/>
            <person name="Richardson P."/>
        </authorList>
    </citation>
    <scope>NUCLEOTIDE SEQUENCE [LARGE SCALE GENOMIC DNA]</scope>
    <source>
        <strain>DSM 266 / SMG 266 / 2430</strain>
    </source>
</reference>